<organism>
    <name type="scientific">Mus musculus</name>
    <name type="common">Mouse</name>
    <dbReference type="NCBI Taxonomy" id="10090"/>
    <lineage>
        <taxon>Eukaryota</taxon>
        <taxon>Metazoa</taxon>
        <taxon>Chordata</taxon>
        <taxon>Craniata</taxon>
        <taxon>Vertebrata</taxon>
        <taxon>Euteleostomi</taxon>
        <taxon>Mammalia</taxon>
        <taxon>Eutheria</taxon>
        <taxon>Euarchontoglires</taxon>
        <taxon>Glires</taxon>
        <taxon>Rodentia</taxon>
        <taxon>Myomorpha</taxon>
        <taxon>Muroidea</taxon>
        <taxon>Muridae</taxon>
        <taxon>Murinae</taxon>
        <taxon>Mus</taxon>
        <taxon>Mus</taxon>
    </lineage>
</organism>
<protein>
    <recommendedName>
        <fullName>Zinc finger protein ZFAT</fullName>
    </recommendedName>
    <alternativeName>
        <fullName>Zinc finger protein 406</fullName>
    </alternativeName>
</protein>
<sequence>METRTAENTAIFMCKCCNLFSPNQSELVTHVSEKHGEEGVNVDDVIIPLRPLNTPENPNPSKGGDEFLVMKRKRGRPKGSTKKPSTEEEVVENLVSPSEDGPLATEEGSRLAPSSLECSKCCRKFSNTRQLRKHICIIVLNLGEEDGDAGNESDLDLEKTYKEDDREKASKRPRAQKTEKVQKISGKEAGQLSGAKKPIISVVLTAHEAIPGATKIIPVEAGPPETGAPPPETTAADLVPRRGYQEYAIQQTPYEQPMKSSRLGPTQLKIFTCEYCNKVFKFKHSLQAHLRIHTNEKPYKCSQCSYASAIKANLNVHLRKHTGEKFACDYCSFTCLSKGHLKVHIERVHKKIKQHCRFCKKKYSDVKNLIKHIRDMHDPQDKKVKEALDELRLMTREGKRQLLYDCHICERKFKNELDRDRHMLVHGDKWPFACELCGHGATKYQALELHVRKHPFVYVCALCLKKFVSSIRLRSHIREVHGAAQETLVFTSSINQSFCLLEPGGDIQQEALGDQLQLAAEEFVCPEIDVRKEEACPGEAQPEVGLRELVVPGDAHAPPPGPLATPQSESSSLSPCKLETTVVSSDLNSLGVVSDDFLLKSDTSSAEPPAAAEATSDTQHRDSAQTQGEEVTLLLAKAKSAGPDPESSPGGRQKVGALPASESDSSTCLRANPTEASDLLPTVTDGGDLGVCQPDSCTPSSEHHPGSTAFMKVLDSLQKKQMNTSLCERIRKVYGDLECEYCGKLFWYQVHFDMHVRTHTREHLYYCSQCHYSSITKNCLKRHVIQKHSNILLKCPTDGCDYSTPDKYKLQAHLKVHTELDKRSYSCPVCEKSFSEDRLIKSHIKTNHPEVSMNTISEVLGRRVQLKGLIGKRAMKCPYCDFYFMKNGSDLQRHIWAHEGVKPFKCSLCEYATRSKSNLKAHMNRHSTEKTHLCDMCGKKFKSKGTLKSHKLLHTSDGKQFKCTVCDYTAAQKPQLLRHMEQHASFKPFRCAHCHYSCNISGSLKRHYNRKHPNEEYTNVGSGELAAEALIQQGGLKCPVCSFVYGTKWEFNRHLKNKHGLKVVEIDGDPKWEPAAETPEEPSTQYLYITEAEDVQGTQAAVAALQDLRYTSESGDRLDPTAVNILQQIIELGSETHDAAAVASVVAMAPGTVTVVKQVTDEEPSSNHTVMIQETLQQASVELAEQHHLVVSSDDVEGIETVTVYTQGGEASEFIVYVQEAVQPVEEQVGEQPAPEL</sequence>
<proteinExistence type="evidence at protein level"/>
<keyword id="KW-0002">3D-structure</keyword>
<keyword id="KW-0025">Alternative splicing</keyword>
<keyword id="KW-0963">Cytoplasm</keyword>
<keyword id="KW-0238">DNA-binding</keyword>
<keyword id="KW-0479">Metal-binding</keyword>
<keyword id="KW-0539">Nucleus</keyword>
<keyword id="KW-1185">Reference proteome</keyword>
<keyword id="KW-0677">Repeat</keyword>
<keyword id="KW-0804">Transcription</keyword>
<keyword id="KW-0805">Transcription regulation</keyword>
<keyword id="KW-0862">Zinc</keyword>
<keyword id="KW-0863">Zinc-finger</keyword>
<feature type="chain" id="PRO_0000047567" description="Zinc finger protein ZFAT">
    <location>
        <begin position="1"/>
        <end position="1237"/>
    </location>
</feature>
<feature type="zinc finger region" description="C2H2-type 1" evidence="2">
    <location>
        <begin position="12"/>
        <end position="35"/>
    </location>
</feature>
<feature type="zinc finger region" description="C2H2-type 2; degenerate" evidence="2">
    <location>
        <begin position="116"/>
        <end position="141"/>
    </location>
</feature>
<feature type="zinc finger region" description="C2H2-type 3" evidence="2">
    <location>
        <begin position="271"/>
        <end position="293"/>
    </location>
</feature>
<feature type="zinc finger region" description="C2H2-type 4" evidence="2">
    <location>
        <begin position="299"/>
        <end position="321"/>
    </location>
</feature>
<feature type="zinc finger region" description="C2H2-type 5" evidence="2">
    <location>
        <begin position="326"/>
        <end position="349"/>
    </location>
</feature>
<feature type="zinc finger region" description="C2H2-type 6" evidence="2 5 7 9">
    <location>
        <begin position="354"/>
        <end position="377"/>
    </location>
</feature>
<feature type="zinc finger region" description="C2H2-type 7" evidence="2">
    <location>
        <begin position="404"/>
        <end position="426"/>
    </location>
</feature>
<feature type="zinc finger region" description="C2H2-type 8" evidence="2">
    <location>
        <begin position="432"/>
        <end position="454"/>
    </location>
</feature>
<feature type="zinc finger region" description="C2H2-type 9" evidence="2 5 8 10">
    <location>
        <begin position="458"/>
        <end position="481"/>
    </location>
</feature>
<feature type="zinc finger region" description="C2H2-type 10" evidence="2">
    <location>
        <begin position="737"/>
        <end position="759"/>
    </location>
</feature>
<feature type="zinc finger region" description="C2H2-type 11" evidence="2">
    <location>
        <begin position="765"/>
        <end position="788"/>
    </location>
</feature>
<feature type="zinc finger region" description="C2H2-type 12" evidence="2">
    <location>
        <begin position="793"/>
        <end position="817"/>
    </location>
</feature>
<feature type="zinc finger region" description="C2H2-type 13" evidence="2">
    <location>
        <begin position="825"/>
        <end position="848"/>
    </location>
</feature>
<feature type="zinc finger region" description="C2H2-type 14; degenerate" evidence="2">
    <location>
        <begin position="875"/>
        <end position="898"/>
    </location>
</feature>
<feature type="zinc finger region" description="C2H2-type 15" evidence="2">
    <location>
        <begin position="904"/>
        <end position="926"/>
    </location>
</feature>
<feature type="zinc finger region" description="C2H2-type 16" evidence="2">
    <location>
        <begin position="932"/>
        <end position="954"/>
    </location>
</feature>
<feature type="zinc finger region" description="C2H2-type 17" evidence="2">
    <location>
        <begin position="961"/>
        <end position="983"/>
    </location>
</feature>
<feature type="zinc finger region" description="C2H2-type 18" evidence="2">
    <location>
        <begin position="989"/>
        <end position="1012"/>
    </location>
</feature>
<feature type="zinc finger region" description="C2H2-type 19" evidence="2">
    <location>
        <begin position="1036"/>
        <end position="1059"/>
    </location>
</feature>
<feature type="region of interest" description="Disordered" evidence="3">
    <location>
        <begin position="50"/>
        <end position="110"/>
    </location>
</feature>
<feature type="region of interest" description="Disordered" evidence="3">
    <location>
        <begin position="147"/>
        <end position="188"/>
    </location>
</feature>
<feature type="region of interest" description="Disordered" evidence="3">
    <location>
        <begin position="551"/>
        <end position="576"/>
    </location>
</feature>
<feature type="region of interest" description="Disordered" evidence="3">
    <location>
        <begin position="601"/>
        <end position="671"/>
    </location>
</feature>
<feature type="compositionally biased region" description="Basic residues" evidence="3">
    <location>
        <begin position="70"/>
        <end position="81"/>
    </location>
</feature>
<feature type="compositionally biased region" description="Basic and acidic residues" evidence="3">
    <location>
        <begin position="156"/>
        <end position="186"/>
    </location>
</feature>
<feature type="compositionally biased region" description="Polar residues" evidence="3">
    <location>
        <begin position="565"/>
        <end position="574"/>
    </location>
</feature>
<feature type="compositionally biased region" description="Low complexity" evidence="3">
    <location>
        <begin position="601"/>
        <end position="617"/>
    </location>
</feature>
<feature type="binding site" evidence="1">
    <location>
        <position position="273"/>
    </location>
    <ligand>
        <name>Zn(2+)</name>
        <dbReference type="ChEBI" id="CHEBI:29105"/>
        <label>1</label>
    </ligand>
</feature>
<feature type="binding site" evidence="1">
    <location>
        <position position="276"/>
    </location>
    <ligand>
        <name>Zn(2+)</name>
        <dbReference type="ChEBI" id="CHEBI:29105"/>
        <label>1</label>
    </ligand>
</feature>
<feature type="binding site" evidence="1">
    <location>
        <position position="289"/>
    </location>
    <ligand>
        <name>Zn(2+)</name>
        <dbReference type="ChEBI" id="CHEBI:29105"/>
        <label>1</label>
    </ligand>
</feature>
<feature type="binding site" evidence="1">
    <location>
        <position position="293"/>
    </location>
    <ligand>
        <name>Zn(2+)</name>
        <dbReference type="ChEBI" id="CHEBI:29105"/>
        <label>1</label>
    </ligand>
</feature>
<feature type="binding site" evidence="1">
    <location>
        <position position="301"/>
    </location>
    <ligand>
        <name>Zn(2+)</name>
        <dbReference type="ChEBI" id="CHEBI:29105"/>
        <label>2</label>
    </ligand>
</feature>
<feature type="binding site" evidence="1">
    <location>
        <position position="304"/>
    </location>
    <ligand>
        <name>Zn(2+)</name>
        <dbReference type="ChEBI" id="CHEBI:29105"/>
        <label>2</label>
    </ligand>
</feature>
<feature type="binding site" evidence="1">
    <location>
        <position position="317"/>
    </location>
    <ligand>
        <name>Zn(2+)</name>
        <dbReference type="ChEBI" id="CHEBI:29105"/>
        <label>2</label>
    </ligand>
</feature>
<feature type="binding site" evidence="1">
    <location>
        <position position="321"/>
    </location>
    <ligand>
        <name>Zn(2+)</name>
        <dbReference type="ChEBI" id="CHEBI:29105"/>
        <label>2</label>
    </ligand>
</feature>
<feature type="binding site" evidence="1">
    <location>
        <position position="328"/>
    </location>
    <ligand>
        <name>Zn(2+)</name>
        <dbReference type="ChEBI" id="CHEBI:29105"/>
        <label>3</label>
    </ligand>
</feature>
<feature type="binding site" evidence="1">
    <location>
        <position position="331"/>
    </location>
    <ligand>
        <name>Zn(2+)</name>
        <dbReference type="ChEBI" id="CHEBI:29105"/>
        <label>3</label>
    </ligand>
</feature>
<feature type="binding site" evidence="1">
    <location>
        <position position="344"/>
    </location>
    <ligand>
        <name>Zn(2+)</name>
        <dbReference type="ChEBI" id="CHEBI:29105"/>
        <label>3</label>
    </ligand>
</feature>
<feature type="binding site" evidence="1">
    <location>
        <position position="349"/>
    </location>
    <ligand>
        <name>Zn(2+)</name>
        <dbReference type="ChEBI" id="CHEBI:29105"/>
        <label>3</label>
    </ligand>
</feature>
<feature type="binding site" evidence="5 7 9">
    <location>
        <position position="356"/>
    </location>
    <ligand>
        <name>Zn(2+)</name>
        <dbReference type="ChEBI" id="CHEBI:29105"/>
        <label>4</label>
    </ligand>
</feature>
<feature type="binding site" evidence="5 7 9">
    <location>
        <position position="359"/>
    </location>
    <ligand>
        <name>Zn(2+)</name>
        <dbReference type="ChEBI" id="CHEBI:29105"/>
        <label>4</label>
    </ligand>
</feature>
<feature type="binding site" evidence="5 7 9">
    <location>
        <position position="372"/>
    </location>
    <ligand>
        <name>Zn(2+)</name>
        <dbReference type="ChEBI" id="CHEBI:29105"/>
        <label>4</label>
    </ligand>
</feature>
<feature type="binding site" evidence="5 7 9">
    <location>
        <position position="377"/>
    </location>
    <ligand>
        <name>Zn(2+)</name>
        <dbReference type="ChEBI" id="CHEBI:29105"/>
        <label>4</label>
    </ligand>
</feature>
<feature type="binding site" evidence="1">
    <location>
        <position position="406"/>
    </location>
    <ligand>
        <name>Zn(2+)</name>
        <dbReference type="ChEBI" id="CHEBI:29105"/>
        <label>5</label>
    </ligand>
</feature>
<feature type="binding site" evidence="1">
    <location>
        <position position="409"/>
    </location>
    <ligand>
        <name>Zn(2+)</name>
        <dbReference type="ChEBI" id="CHEBI:29105"/>
        <label>5</label>
    </ligand>
</feature>
<feature type="binding site" evidence="1">
    <location>
        <position position="422"/>
    </location>
    <ligand>
        <name>Zn(2+)</name>
        <dbReference type="ChEBI" id="CHEBI:29105"/>
        <label>5</label>
    </ligand>
</feature>
<feature type="binding site" evidence="1">
    <location>
        <position position="426"/>
    </location>
    <ligand>
        <name>Zn(2+)</name>
        <dbReference type="ChEBI" id="CHEBI:29105"/>
        <label>5</label>
    </ligand>
</feature>
<feature type="binding site" evidence="5 8 10">
    <location>
        <position position="460"/>
    </location>
    <ligand>
        <name>Zn(2+)</name>
        <dbReference type="ChEBI" id="CHEBI:29105"/>
        <label>6</label>
    </ligand>
</feature>
<feature type="binding site" evidence="5 8 10">
    <location>
        <position position="463"/>
    </location>
    <ligand>
        <name>Zn(2+)</name>
        <dbReference type="ChEBI" id="CHEBI:29105"/>
        <label>6</label>
    </ligand>
</feature>
<feature type="binding site" evidence="5 8 10">
    <location>
        <position position="476"/>
    </location>
    <ligand>
        <name>Zn(2+)</name>
        <dbReference type="ChEBI" id="CHEBI:29105"/>
        <label>6</label>
    </ligand>
</feature>
<feature type="binding site" evidence="5 8 10">
    <location>
        <position position="481"/>
    </location>
    <ligand>
        <name>Zn(2+)</name>
        <dbReference type="ChEBI" id="CHEBI:29105"/>
        <label>6</label>
    </ligand>
</feature>
<feature type="binding site" evidence="1">
    <location>
        <position position="767"/>
    </location>
    <ligand>
        <name>Zn(2+)</name>
        <dbReference type="ChEBI" id="CHEBI:29105"/>
        <label>7</label>
    </ligand>
</feature>
<feature type="binding site" evidence="1">
    <location>
        <position position="770"/>
    </location>
    <ligand>
        <name>Zn(2+)</name>
        <dbReference type="ChEBI" id="CHEBI:29105"/>
        <label>7</label>
    </ligand>
</feature>
<feature type="binding site" evidence="1">
    <location>
        <position position="783"/>
    </location>
    <ligand>
        <name>Zn(2+)</name>
        <dbReference type="ChEBI" id="CHEBI:29105"/>
        <label>7</label>
    </ligand>
</feature>
<feature type="binding site" evidence="1">
    <location>
        <position position="788"/>
    </location>
    <ligand>
        <name>Zn(2+)</name>
        <dbReference type="ChEBI" id="CHEBI:29105"/>
        <label>7</label>
    </ligand>
</feature>
<feature type="binding site" evidence="1">
    <location>
        <position position="795"/>
    </location>
    <ligand>
        <name>Zn(2+)</name>
        <dbReference type="ChEBI" id="CHEBI:29105"/>
        <label>8</label>
    </ligand>
</feature>
<feature type="binding site" evidence="1">
    <location>
        <position position="800"/>
    </location>
    <ligand>
        <name>Zn(2+)</name>
        <dbReference type="ChEBI" id="CHEBI:29105"/>
        <label>8</label>
    </ligand>
</feature>
<feature type="binding site" evidence="1">
    <location>
        <position position="813"/>
    </location>
    <ligand>
        <name>Zn(2+)</name>
        <dbReference type="ChEBI" id="CHEBI:29105"/>
        <label>8</label>
    </ligand>
</feature>
<feature type="binding site" evidence="1">
    <location>
        <position position="817"/>
    </location>
    <ligand>
        <name>Zn(2+)</name>
        <dbReference type="ChEBI" id="CHEBI:29105"/>
        <label>8</label>
    </ligand>
</feature>
<feature type="binding site" evidence="1">
    <location>
        <position position="827"/>
    </location>
    <ligand>
        <name>Zn(2+)</name>
        <dbReference type="ChEBI" id="CHEBI:29105"/>
        <label>9</label>
    </ligand>
</feature>
<feature type="binding site" evidence="1">
    <location>
        <position position="830"/>
    </location>
    <ligand>
        <name>Zn(2+)</name>
        <dbReference type="ChEBI" id="CHEBI:29105"/>
        <label>9</label>
    </ligand>
</feature>
<feature type="binding site" evidence="1">
    <location>
        <position position="843"/>
    </location>
    <ligand>
        <name>Zn(2+)</name>
        <dbReference type="ChEBI" id="CHEBI:29105"/>
        <label>9</label>
    </ligand>
</feature>
<feature type="binding site" evidence="1">
    <location>
        <position position="848"/>
    </location>
    <ligand>
        <name>Zn(2+)</name>
        <dbReference type="ChEBI" id="CHEBI:29105"/>
        <label>9</label>
    </ligand>
</feature>
<feature type="binding site" evidence="1">
    <location>
        <position position="877"/>
    </location>
    <ligand>
        <name>Zn(2+)</name>
        <dbReference type="ChEBI" id="CHEBI:29105"/>
        <label>10</label>
    </ligand>
</feature>
<feature type="binding site" evidence="1">
    <location>
        <position position="880"/>
    </location>
    <ligand>
        <name>Zn(2+)</name>
        <dbReference type="ChEBI" id="CHEBI:29105"/>
        <label>10</label>
    </ligand>
</feature>
<feature type="binding site" evidence="1">
    <location>
        <position position="894"/>
    </location>
    <ligand>
        <name>Zn(2+)</name>
        <dbReference type="ChEBI" id="CHEBI:29105"/>
        <label>10</label>
    </ligand>
</feature>
<feature type="binding site" evidence="1">
    <location>
        <position position="898"/>
    </location>
    <ligand>
        <name>Zn(2+)</name>
        <dbReference type="ChEBI" id="CHEBI:29105"/>
        <label>10</label>
    </ligand>
</feature>
<feature type="binding site" evidence="1">
    <location>
        <position position="906"/>
    </location>
    <ligand>
        <name>Zn(2+)</name>
        <dbReference type="ChEBI" id="CHEBI:29105"/>
        <label>11</label>
    </ligand>
</feature>
<feature type="binding site" evidence="1">
    <location>
        <position position="909"/>
    </location>
    <ligand>
        <name>Zn(2+)</name>
        <dbReference type="ChEBI" id="CHEBI:29105"/>
        <label>11</label>
    </ligand>
</feature>
<feature type="binding site" evidence="1">
    <location>
        <position position="922"/>
    </location>
    <ligand>
        <name>Zn(2+)</name>
        <dbReference type="ChEBI" id="CHEBI:29105"/>
        <label>11</label>
    </ligand>
</feature>
<feature type="binding site" evidence="1">
    <location>
        <position position="926"/>
    </location>
    <ligand>
        <name>Zn(2+)</name>
        <dbReference type="ChEBI" id="CHEBI:29105"/>
        <label>11</label>
    </ligand>
</feature>
<feature type="binding site" evidence="1">
    <location>
        <position position="934"/>
    </location>
    <ligand>
        <name>Zn(2+)</name>
        <dbReference type="ChEBI" id="CHEBI:29105"/>
        <label>12</label>
    </ligand>
</feature>
<feature type="binding site" evidence="1">
    <location>
        <position position="937"/>
    </location>
    <ligand>
        <name>Zn(2+)</name>
        <dbReference type="ChEBI" id="CHEBI:29105"/>
        <label>12</label>
    </ligand>
</feature>
<feature type="binding site" evidence="1">
    <location>
        <position position="950"/>
    </location>
    <ligand>
        <name>Zn(2+)</name>
        <dbReference type="ChEBI" id="CHEBI:29105"/>
        <label>12</label>
    </ligand>
</feature>
<feature type="binding site" evidence="1">
    <location>
        <position position="953"/>
    </location>
    <ligand>
        <name>Zn(2+)</name>
        <dbReference type="ChEBI" id="CHEBI:29105"/>
        <label>12</label>
    </ligand>
</feature>
<feature type="splice variant" id="VSP_034940" description="In isoform 2." evidence="6">
    <location>
        <begin position="144"/>
        <end position="150"/>
    </location>
</feature>
<feature type="splice variant" id="VSP_034941" description="In isoform 2." evidence="6">
    <location>
        <begin position="1063"/>
        <end position="1073"/>
    </location>
</feature>
<feature type="strand" evidence="11">
    <location>
        <begin position="357"/>
        <end position="359"/>
    </location>
</feature>
<feature type="strand" evidence="13">
    <location>
        <begin position="362"/>
        <end position="365"/>
    </location>
</feature>
<feature type="helix" evidence="11">
    <location>
        <begin position="366"/>
        <end position="376"/>
    </location>
</feature>
<feature type="strand" evidence="12">
    <location>
        <begin position="461"/>
        <end position="463"/>
    </location>
</feature>
<feature type="strand" evidence="12">
    <location>
        <begin position="466"/>
        <end position="469"/>
    </location>
</feature>
<feature type="helix" evidence="12">
    <location>
        <begin position="470"/>
        <end position="479"/>
    </location>
</feature>
<accession>Q7TS63</accession>
<accession>B2C322</accession>
<evidence type="ECO:0000250" key="1">
    <source>
        <dbReference type="UniProtKB" id="Q9P243"/>
    </source>
</evidence>
<evidence type="ECO:0000255" key="2">
    <source>
        <dbReference type="PROSITE-ProRule" id="PRU00042"/>
    </source>
</evidence>
<evidence type="ECO:0000256" key="3">
    <source>
        <dbReference type="SAM" id="MobiDB-lite"/>
    </source>
</evidence>
<evidence type="ECO:0000269" key="4">
    <source>
    </source>
</evidence>
<evidence type="ECO:0000269" key="5">
    <source>
    </source>
</evidence>
<evidence type="ECO:0000303" key="6">
    <source>
    </source>
</evidence>
<evidence type="ECO:0007744" key="7">
    <source>
        <dbReference type="PDB" id="2ELW"/>
    </source>
</evidence>
<evidence type="ECO:0007744" key="8">
    <source>
        <dbReference type="PDB" id="2ELX"/>
    </source>
</evidence>
<evidence type="ECO:0007744" key="9">
    <source>
        <dbReference type="PDB" id="2RV4"/>
    </source>
</evidence>
<evidence type="ECO:0007744" key="10">
    <source>
        <dbReference type="PDB" id="2RV5"/>
    </source>
</evidence>
<evidence type="ECO:0007829" key="11">
    <source>
        <dbReference type="PDB" id="2ELW"/>
    </source>
</evidence>
<evidence type="ECO:0007829" key="12">
    <source>
        <dbReference type="PDB" id="2ELX"/>
    </source>
</evidence>
<evidence type="ECO:0007829" key="13">
    <source>
        <dbReference type="PDB" id="2RV4"/>
    </source>
</evidence>
<gene>
    <name type="primary">Zfat</name>
    <name type="synonym">Gm922</name>
    <name type="synonym">Zfat1</name>
    <name type="synonym">Zfp406</name>
    <name type="synonym">Znf406</name>
</gene>
<dbReference type="EMBL" id="EU221277">
    <property type="protein sequence ID" value="ABY67968.1"/>
    <property type="molecule type" value="mRNA"/>
</dbReference>
<dbReference type="EMBL" id="BC053930">
    <property type="protein sequence ID" value="AAH53930.1"/>
    <property type="molecule type" value="mRNA"/>
</dbReference>
<dbReference type="CCDS" id="CCDS49623.1">
    <molecule id="Q7TS63-1"/>
</dbReference>
<dbReference type="CCDS" id="CCDS49624.1">
    <molecule id="Q7TS63-2"/>
</dbReference>
<dbReference type="RefSeq" id="NP_001139360.1">
    <molecule id="Q7TS63-1"/>
    <property type="nucleotide sequence ID" value="NM_001145888.2"/>
</dbReference>
<dbReference type="RefSeq" id="NP_941046.1">
    <molecule id="Q7TS63-2"/>
    <property type="nucleotide sequence ID" value="NM_198644.3"/>
</dbReference>
<dbReference type="PDB" id="2ELW">
    <property type="method" value="NMR"/>
    <property type="chains" value="A=352-381"/>
</dbReference>
<dbReference type="PDB" id="2ELX">
    <property type="method" value="NMR"/>
    <property type="chains" value="A=458-485"/>
</dbReference>
<dbReference type="PDB" id="2RV4">
    <property type="method" value="NMR"/>
    <property type="chains" value="A=352-381"/>
</dbReference>
<dbReference type="PDB" id="2RV5">
    <property type="method" value="NMR"/>
    <property type="chains" value="A=458-485"/>
</dbReference>
<dbReference type="PDBsum" id="2ELW"/>
<dbReference type="PDBsum" id="2ELX"/>
<dbReference type="PDBsum" id="2RV4"/>
<dbReference type="PDBsum" id="2RV5"/>
<dbReference type="BMRB" id="Q7TS63"/>
<dbReference type="SMR" id="Q7TS63"/>
<dbReference type="BioGRID" id="237734">
    <property type="interactions" value="16"/>
</dbReference>
<dbReference type="FunCoup" id="Q7TS63">
    <property type="interactions" value="2173"/>
</dbReference>
<dbReference type="STRING" id="10090.ENSMUSP00000125257"/>
<dbReference type="iPTMnet" id="Q7TS63"/>
<dbReference type="PhosphoSitePlus" id="Q7TS63"/>
<dbReference type="PaxDb" id="10090-ENSMUSP00000125257"/>
<dbReference type="ProteomicsDB" id="298519">
    <molecule id="Q7TS63-1"/>
</dbReference>
<dbReference type="ProteomicsDB" id="299544">
    <molecule id="Q7TS63-2"/>
</dbReference>
<dbReference type="Antibodypedia" id="27498">
    <property type="antibodies" value="35 antibodies from 15 providers"/>
</dbReference>
<dbReference type="DNASU" id="380993"/>
<dbReference type="Ensembl" id="ENSMUST00000160248.8">
    <molecule id="Q7TS63-1"/>
    <property type="protein sequence ID" value="ENSMUSP00000125257.2"/>
    <property type="gene ID" value="ENSMUSG00000022335.18"/>
</dbReference>
<dbReference type="Ensembl" id="ENSMUST00000162054.9">
    <molecule id="Q7TS63-2"/>
    <property type="protein sequence ID" value="ENSMUSP00000125732.2"/>
    <property type="gene ID" value="ENSMUSG00000022335.18"/>
</dbReference>
<dbReference type="GeneID" id="380993"/>
<dbReference type="KEGG" id="mmu:380993"/>
<dbReference type="UCSC" id="uc007wbd.2">
    <molecule id="Q7TS63-2"/>
    <property type="organism name" value="mouse"/>
</dbReference>
<dbReference type="UCSC" id="uc011zto.1">
    <molecule id="Q7TS63-1"/>
    <property type="organism name" value="mouse"/>
</dbReference>
<dbReference type="AGR" id="MGI:2681865"/>
<dbReference type="CTD" id="57623"/>
<dbReference type="MGI" id="MGI:2681865">
    <property type="gene designation" value="Zfat"/>
</dbReference>
<dbReference type="VEuPathDB" id="HostDB:ENSMUSG00000022335"/>
<dbReference type="eggNOG" id="KOG1721">
    <property type="taxonomic scope" value="Eukaryota"/>
</dbReference>
<dbReference type="GeneTree" id="ENSGT00940000156658"/>
<dbReference type="HOGENOM" id="CLU_008355_0_0_1"/>
<dbReference type="InParanoid" id="Q7TS63"/>
<dbReference type="OMA" id="WEQTTEI"/>
<dbReference type="OrthoDB" id="10015593at2759"/>
<dbReference type="PhylomeDB" id="Q7TS63"/>
<dbReference type="TreeFam" id="TF350017"/>
<dbReference type="BioGRID-ORCS" id="380993">
    <property type="hits" value="10 hits in 77 CRISPR screens"/>
</dbReference>
<dbReference type="ChiTaRS" id="Zfat">
    <property type="organism name" value="mouse"/>
</dbReference>
<dbReference type="EvolutionaryTrace" id="Q7TS63"/>
<dbReference type="PRO" id="PR:Q7TS63"/>
<dbReference type="Proteomes" id="UP000000589">
    <property type="component" value="Chromosome 15"/>
</dbReference>
<dbReference type="RNAct" id="Q7TS63">
    <property type="molecule type" value="protein"/>
</dbReference>
<dbReference type="Bgee" id="ENSMUSG00000022335">
    <property type="expression patterns" value="Expressed in cleaving embryo and 130 other cell types or tissues"/>
</dbReference>
<dbReference type="ExpressionAtlas" id="Q7TS63">
    <property type="expression patterns" value="baseline and differential"/>
</dbReference>
<dbReference type="GO" id="GO:0005829">
    <property type="term" value="C:cytosol"/>
    <property type="evidence" value="ECO:0007669"/>
    <property type="project" value="UniProtKB-SubCell"/>
</dbReference>
<dbReference type="GO" id="GO:0005634">
    <property type="term" value="C:nucleus"/>
    <property type="evidence" value="ECO:0000305"/>
    <property type="project" value="MGI"/>
</dbReference>
<dbReference type="GO" id="GO:0003677">
    <property type="term" value="F:DNA binding"/>
    <property type="evidence" value="ECO:0007669"/>
    <property type="project" value="UniProtKB-KW"/>
</dbReference>
<dbReference type="GO" id="GO:0001228">
    <property type="term" value="F:DNA-binding transcription activator activity, RNA polymerase II-specific"/>
    <property type="evidence" value="ECO:0000314"/>
    <property type="project" value="MGI"/>
</dbReference>
<dbReference type="GO" id="GO:0008270">
    <property type="term" value="F:zinc ion binding"/>
    <property type="evidence" value="ECO:0007669"/>
    <property type="project" value="UniProtKB-KW"/>
</dbReference>
<dbReference type="GO" id="GO:0002244">
    <property type="term" value="P:hematopoietic progenitor cell differentiation"/>
    <property type="evidence" value="ECO:0000315"/>
    <property type="project" value="MGI"/>
</dbReference>
<dbReference type="GO" id="GO:0030097">
    <property type="term" value="P:hemopoiesis"/>
    <property type="evidence" value="ECO:0000315"/>
    <property type="project" value="MGI"/>
</dbReference>
<dbReference type="GO" id="GO:0060712">
    <property type="term" value="P:spongiotrophoblast layer development"/>
    <property type="evidence" value="ECO:0000315"/>
    <property type="project" value="MGI"/>
</dbReference>
<dbReference type="FunFam" id="3.30.160.60:FF:000255">
    <property type="entry name" value="Zinc finger and AT-hook domain containing"/>
    <property type="match status" value="1"/>
</dbReference>
<dbReference type="FunFam" id="3.30.160.60:FF:000306">
    <property type="entry name" value="Zinc finger and AT-hook domain containing"/>
    <property type="match status" value="1"/>
</dbReference>
<dbReference type="FunFam" id="3.30.160.60:FF:000327">
    <property type="entry name" value="Zinc finger and AT-hook domain containing"/>
    <property type="match status" value="1"/>
</dbReference>
<dbReference type="FunFam" id="3.30.160.60:FF:000351">
    <property type="entry name" value="Zinc finger and AT-hook domain containing"/>
    <property type="match status" value="1"/>
</dbReference>
<dbReference type="FunFam" id="3.30.160.60:FF:000401">
    <property type="entry name" value="Zinc finger and AT-hook domain containing"/>
    <property type="match status" value="1"/>
</dbReference>
<dbReference type="FunFam" id="3.30.160.60:FF:000442">
    <property type="entry name" value="Zinc finger and AT-hook domain containing"/>
    <property type="match status" value="1"/>
</dbReference>
<dbReference type="FunFam" id="3.30.160.60:FF:000687">
    <property type="entry name" value="Zinc finger and AT-hook domain containing"/>
    <property type="match status" value="1"/>
</dbReference>
<dbReference type="FunFam" id="3.30.160.60:FF:001388">
    <property type="entry name" value="Zinc finger and AT-hook domain containing"/>
    <property type="match status" value="1"/>
</dbReference>
<dbReference type="FunFam" id="3.30.160.60:FF:001389">
    <property type="entry name" value="Zinc finger and AT-hook domain containing"/>
    <property type="match status" value="1"/>
</dbReference>
<dbReference type="Gene3D" id="3.30.160.60">
    <property type="entry name" value="Classic Zinc Finger"/>
    <property type="match status" value="11"/>
</dbReference>
<dbReference type="InterPro" id="IPR036236">
    <property type="entry name" value="Znf_C2H2_sf"/>
</dbReference>
<dbReference type="InterPro" id="IPR013087">
    <property type="entry name" value="Znf_C2H2_type"/>
</dbReference>
<dbReference type="PANTHER" id="PTHR24408">
    <property type="entry name" value="ZINC FINGER PROTEIN"/>
    <property type="match status" value="1"/>
</dbReference>
<dbReference type="PANTHER" id="PTHR24408:SF21">
    <property type="entry name" value="ZINC FINGER PROTEIN"/>
    <property type="match status" value="1"/>
</dbReference>
<dbReference type="Pfam" id="PF00096">
    <property type="entry name" value="zf-C2H2"/>
    <property type="match status" value="4"/>
</dbReference>
<dbReference type="Pfam" id="PF13909">
    <property type="entry name" value="zf-H2C2_5"/>
    <property type="match status" value="1"/>
</dbReference>
<dbReference type="SMART" id="SM00355">
    <property type="entry name" value="ZnF_C2H2"/>
    <property type="match status" value="19"/>
</dbReference>
<dbReference type="SUPFAM" id="SSF57667">
    <property type="entry name" value="beta-beta-alpha zinc fingers"/>
    <property type="match status" value="8"/>
</dbReference>
<dbReference type="PROSITE" id="PS00028">
    <property type="entry name" value="ZINC_FINGER_C2H2_1"/>
    <property type="match status" value="10"/>
</dbReference>
<dbReference type="PROSITE" id="PS50157">
    <property type="entry name" value="ZINC_FINGER_C2H2_2"/>
    <property type="match status" value="13"/>
</dbReference>
<reference key="1">
    <citation type="journal article" date="2008" name="Genomics">
        <title>ZFAT expression in B and T lymphocytes and identification of ZFAT-regulated genes.</title>
        <authorList>
            <person name="Koyanagi M."/>
            <person name="Nakabayashi K."/>
            <person name="Fujimoto T."/>
            <person name="Gu N."/>
            <person name="Baba I."/>
            <person name="Takashima Y."/>
            <person name="Doi K."/>
            <person name="Harada H."/>
            <person name="Kato N."/>
            <person name="Sasazuki T."/>
            <person name="Shirasawa S."/>
        </authorList>
    </citation>
    <scope>NUCLEOTIDE SEQUENCE [MRNA] (ISOFORM 1)</scope>
    <scope>FUNCTION</scope>
    <scope>SUBCELLULAR LOCATION</scope>
    <scope>TISSUE SPECIFICITY</scope>
    <scope>DEVELOPMENTAL STAGE</scope>
    <source>
        <strain>C57BL/6J</strain>
    </source>
</reference>
<reference key="2">
    <citation type="journal article" date="2004" name="Genome Res.">
        <title>The status, quality, and expansion of the NIH full-length cDNA project: the Mammalian Gene Collection (MGC).</title>
        <authorList>
            <consortium name="The MGC Project Team"/>
        </authorList>
    </citation>
    <scope>NUCLEOTIDE SEQUENCE [LARGE SCALE MRNA] (ISOFORM 2)</scope>
    <source>
        <tissue>Olfactory epithelium</tissue>
    </source>
</reference>
<reference evidence="7 8 9 10" key="3">
    <citation type="journal article" date="2015" name="J. Struct. Funct. Genomics">
        <title>Solution structures of the DNA-binding domains of immune-related zinc-finger protein ZFAT.</title>
        <authorList>
            <person name="Tochio N."/>
            <person name="Umehara T."/>
            <person name="Nakabayashi K."/>
            <person name="Yoneyama M."/>
            <person name="Tsuda K."/>
            <person name="Shirouzu M."/>
            <person name="Koshiba S."/>
            <person name="Watanabe S."/>
            <person name="Kigawa T."/>
            <person name="Sasazuki T."/>
            <person name="Shirasawa S."/>
            <person name="Yokoyama S."/>
        </authorList>
    </citation>
    <scope>STRUCTURE BY NMR OF 352-381 AND 458-485 IN COMPLEX WITH ZN(2+)</scope>
    <scope>ZINC FINGERS</scope>
</reference>
<comment type="function">
    <text evidence="4">May be involved in transcriptional regulation. Overexpression causes down-regulation of a number of genes involved in the immune response. Some genes are also up-regulated.</text>
</comment>
<comment type="subcellular location">
    <subcellularLocation>
        <location evidence="4">Nucleus</location>
    </subcellularLocation>
    <subcellularLocation>
        <location evidence="4">Cytoplasm</location>
        <location evidence="4">Cytosol</location>
    </subcellularLocation>
</comment>
<comment type="alternative products">
    <event type="alternative splicing"/>
    <isoform>
        <id>Q7TS63-1</id>
        <name>1</name>
        <sequence type="displayed"/>
    </isoform>
    <isoform>
        <id>Q7TS63-2</id>
        <name>2</name>
        <sequence type="described" ref="VSP_034940 VSP_034941"/>
    </isoform>
</comment>
<comment type="tissue specificity">
    <text evidence="4">Detected in spleen and thymus but not in liver, muscle, heart, kidney, brain, bone marrow or pancreas. Expressed in CD19+, CD4+ and CD8+ lymphocytes but not in CD11b+ lymphocytes or peritoneal macrophages (at protein level).</text>
</comment>
<comment type="developmental stage">
    <text evidence="4">Up-regulated during the transition from CD4-/CD8- to CD4+/CD8+ thymocytes.</text>
</comment>
<name>ZFAT_MOUSE</name>